<reference key="1">
    <citation type="journal article" date="2002" name="Proc. Natl. Acad. Sci. U.S.A.">
        <title>Complete genome sequence of Clostridium perfringens, an anaerobic flesh-eater.</title>
        <authorList>
            <person name="Shimizu T."/>
            <person name="Ohtani K."/>
            <person name="Hirakawa H."/>
            <person name="Ohshima K."/>
            <person name="Yamashita A."/>
            <person name="Shiba T."/>
            <person name="Ogasawara N."/>
            <person name="Hattori M."/>
            <person name="Kuhara S."/>
            <person name="Hayashi H."/>
        </authorList>
    </citation>
    <scope>NUCLEOTIDE SEQUENCE [LARGE SCALE GENOMIC DNA]</scope>
    <source>
        <strain>13 / Type A</strain>
    </source>
</reference>
<evidence type="ECO:0000255" key="1">
    <source>
        <dbReference type="HAMAP-Rule" id="MF_00104"/>
    </source>
</evidence>
<gene>
    <name evidence="1" type="primary">rnc</name>
    <name type="synonym">rncS</name>
    <name type="ordered locus">CPE1718</name>
</gene>
<organism>
    <name type="scientific">Clostridium perfringens (strain 13 / Type A)</name>
    <dbReference type="NCBI Taxonomy" id="195102"/>
    <lineage>
        <taxon>Bacteria</taxon>
        <taxon>Bacillati</taxon>
        <taxon>Bacillota</taxon>
        <taxon>Clostridia</taxon>
        <taxon>Eubacteriales</taxon>
        <taxon>Clostridiaceae</taxon>
        <taxon>Clostridium</taxon>
    </lineage>
</organism>
<comment type="function">
    <text evidence="1">Digests double-stranded RNA. Involved in the processing of primary rRNA transcript to yield the immediate precursors to the large and small rRNAs (23S and 16S). Processes some mRNAs, and tRNAs when they are encoded in the rRNA operon. Processes pre-crRNA and tracrRNA of type II CRISPR loci if present in the organism.</text>
</comment>
<comment type="catalytic activity">
    <reaction evidence="1">
        <text>Endonucleolytic cleavage to 5'-phosphomonoester.</text>
        <dbReference type="EC" id="3.1.26.3"/>
    </reaction>
</comment>
<comment type="cofactor">
    <cofactor evidence="1">
        <name>Mg(2+)</name>
        <dbReference type="ChEBI" id="CHEBI:18420"/>
    </cofactor>
</comment>
<comment type="subunit">
    <text evidence="1">Homodimer.</text>
</comment>
<comment type="subcellular location">
    <subcellularLocation>
        <location evidence="1">Cytoplasm</location>
    </subcellularLocation>
</comment>
<comment type="similarity">
    <text evidence="1">Belongs to the ribonuclease III family.</text>
</comment>
<sequence>MKDINLIEVEKLIGIEFENKGVLITALTHSSYANQFKDVKYNERLEFLGDSVLQLCVTKYLFNNYKDKSEGELTKIRALVVCENSLHKVSKNLSLGKYIRMSKGEELTGGRERTSIQADALEAVIAAVYLDKGIEVANDFILRNFKDVIDKAINEEIILDFKTRLQEVLQKNGEVNIVYNLVKHEGPPHRRKFFTDLLINNEIMGQGVGFSKKESEQNAAKAALQRLGEIKWEKDTI</sequence>
<keyword id="KW-0963">Cytoplasm</keyword>
<keyword id="KW-0255">Endonuclease</keyword>
<keyword id="KW-0378">Hydrolase</keyword>
<keyword id="KW-0460">Magnesium</keyword>
<keyword id="KW-0479">Metal-binding</keyword>
<keyword id="KW-0507">mRNA processing</keyword>
<keyword id="KW-0540">Nuclease</keyword>
<keyword id="KW-1185">Reference proteome</keyword>
<keyword id="KW-0694">RNA-binding</keyword>
<keyword id="KW-0698">rRNA processing</keyword>
<keyword id="KW-0699">rRNA-binding</keyword>
<keyword id="KW-0819">tRNA processing</keyword>
<dbReference type="EC" id="3.1.26.3" evidence="1"/>
<dbReference type="EMBL" id="BA000016">
    <property type="protein sequence ID" value="BAB81424.1"/>
    <property type="molecule type" value="Genomic_DNA"/>
</dbReference>
<dbReference type="SMR" id="Q8XJN8"/>
<dbReference type="STRING" id="195102.gene:10490982"/>
<dbReference type="KEGG" id="cpe:CPE1718"/>
<dbReference type="HOGENOM" id="CLU_000907_1_3_9"/>
<dbReference type="Proteomes" id="UP000000818">
    <property type="component" value="Chromosome"/>
</dbReference>
<dbReference type="GO" id="GO:0005737">
    <property type="term" value="C:cytoplasm"/>
    <property type="evidence" value="ECO:0007669"/>
    <property type="project" value="UniProtKB-SubCell"/>
</dbReference>
<dbReference type="GO" id="GO:0003725">
    <property type="term" value="F:double-stranded RNA binding"/>
    <property type="evidence" value="ECO:0007669"/>
    <property type="project" value="TreeGrafter"/>
</dbReference>
<dbReference type="GO" id="GO:0046872">
    <property type="term" value="F:metal ion binding"/>
    <property type="evidence" value="ECO:0007669"/>
    <property type="project" value="UniProtKB-KW"/>
</dbReference>
<dbReference type="GO" id="GO:0004525">
    <property type="term" value="F:ribonuclease III activity"/>
    <property type="evidence" value="ECO:0007669"/>
    <property type="project" value="UniProtKB-UniRule"/>
</dbReference>
<dbReference type="GO" id="GO:0019843">
    <property type="term" value="F:rRNA binding"/>
    <property type="evidence" value="ECO:0007669"/>
    <property type="project" value="UniProtKB-KW"/>
</dbReference>
<dbReference type="GO" id="GO:0006397">
    <property type="term" value="P:mRNA processing"/>
    <property type="evidence" value="ECO:0007669"/>
    <property type="project" value="UniProtKB-UniRule"/>
</dbReference>
<dbReference type="GO" id="GO:0010468">
    <property type="term" value="P:regulation of gene expression"/>
    <property type="evidence" value="ECO:0007669"/>
    <property type="project" value="TreeGrafter"/>
</dbReference>
<dbReference type="GO" id="GO:0006364">
    <property type="term" value="P:rRNA processing"/>
    <property type="evidence" value="ECO:0007669"/>
    <property type="project" value="UniProtKB-UniRule"/>
</dbReference>
<dbReference type="GO" id="GO:0008033">
    <property type="term" value="P:tRNA processing"/>
    <property type="evidence" value="ECO:0007669"/>
    <property type="project" value="UniProtKB-KW"/>
</dbReference>
<dbReference type="CDD" id="cd10845">
    <property type="entry name" value="DSRM_RNAse_III_family"/>
    <property type="match status" value="1"/>
</dbReference>
<dbReference type="CDD" id="cd00593">
    <property type="entry name" value="RIBOc"/>
    <property type="match status" value="1"/>
</dbReference>
<dbReference type="FunFam" id="1.10.1520.10:FF:000001">
    <property type="entry name" value="Ribonuclease 3"/>
    <property type="match status" value="1"/>
</dbReference>
<dbReference type="FunFam" id="3.30.160.20:FF:000003">
    <property type="entry name" value="Ribonuclease 3"/>
    <property type="match status" value="1"/>
</dbReference>
<dbReference type="Gene3D" id="3.30.160.20">
    <property type="match status" value="1"/>
</dbReference>
<dbReference type="Gene3D" id="1.10.1520.10">
    <property type="entry name" value="Ribonuclease III domain"/>
    <property type="match status" value="1"/>
</dbReference>
<dbReference type="HAMAP" id="MF_00104">
    <property type="entry name" value="RNase_III"/>
    <property type="match status" value="1"/>
</dbReference>
<dbReference type="InterPro" id="IPR014720">
    <property type="entry name" value="dsRBD_dom"/>
</dbReference>
<dbReference type="InterPro" id="IPR011907">
    <property type="entry name" value="RNase_III"/>
</dbReference>
<dbReference type="InterPro" id="IPR000999">
    <property type="entry name" value="RNase_III_dom"/>
</dbReference>
<dbReference type="InterPro" id="IPR036389">
    <property type="entry name" value="RNase_III_sf"/>
</dbReference>
<dbReference type="NCBIfam" id="TIGR02191">
    <property type="entry name" value="RNaseIII"/>
    <property type="match status" value="1"/>
</dbReference>
<dbReference type="PANTHER" id="PTHR11207:SF0">
    <property type="entry name" value="RIBONUCLEASE 3"/>
    <property type="match status" value="1"/>
</dbReference>
<dbReference type="PANTHER" id="PTHR11207">
    <property type="entry name" value="RIBONUCLEASE III"/>
    <property type="match status" value="1"/>
</dbReference>
<dbReference type="Pfam" id="PF00035">
    <property type="entry name" value="dsrm"/>
    <property type="match status" value="1"/>
</dbReference>
<dbReference type="Pfam" id="PF14622">
    <property type="entry name" value="Ribonucleas_3_3"/>
    <property type="match status" value="1"/>
</dbReference>
<dbReference type="SMART" id="SM00358">
    <property type="entry name" value="DSRM"/>
    <property type="match status" value="1"/>
</dbReference>
<dbReference type="SMART" id="SM00535">
    <property type="entry name" value="RIBOc"/>
    <property type="match status" value="1"/>
</dbReference>
<dbReference type="SUPFAM" id="SSF54768">
    <property type="entry name" value="dsRNA-binding domain-like"/>
    <property type="match status" value="1"/>
</dbReference>
<dbReference type="SUPFAM" id="SSF69065">
    <property type="entry name" value="RNase III domain-like"/>
    <property type="match status" value="1"/>
</dbReference>
<dbReference type="PROSITE" id="PS50137">
    <property type="entry name" value="DS_RBD"/>
    <property type="match status" value="1"/>
</dbReference>
<dbReference type="PROSITE" id="PS00517">
    <property type="entry name" value="RNASE_3_1"/>
    <property type="match status" value="1"/>
</dbReference>
<dbReference type="PROSITE" id="PS50142">
    <property type="entry name" value="RNASE_3_2"/>
    <property type="match status" value="1"/>
</dbReference>
<name>RNC_CLOPE</name>
<feature type="chain" id="PRO_0000180391" description="Ribonuclease 3">
    <location>
        <begin position="1"/>
        <end position="237"/>
    </location>
</feature>
<feature type="domain" description="RNase III" evidence="1">
    <location>
        <begin position="6"/>
        <end position="133"/>
    </location>
</feature>
<feature type="domain" description="DRBM" evidence="1">
    <location>
        <begin position="160"/>
        <end position="229"/>
    </location>
</feature>
<feature type="active site" evidence="1">
    <location>
        <position position="50"/>
    </location>
</feature>
<feature type="active site" evidence="1">
    <location>
        <position position="122"/>
    </location>
</feature>
<feature type="binding site" evidence="1">
    <location>
        <position position="46"/>
    </location>
    <ligand>
        <name>Mg(2+)</name>
        <dbReference type="ChEBI" id="CHEBI:18420"/>
    </ligand>
</feature>
<feature type="binding site" evidence="1">
    <location>
        <position position="119"/>
    </location>
    <ligand>
        <name>Mg(2+)</name>
        <dbReference type="ChEBI" id="CHEBI:18420"/>
    </ligand>
</feature>
<feature type="binding site" evidence="1">
    <location>
        <position position="122"/>
    </location>
    <ligand>
        <name>Mg(2+)</name>
        <dbReference type="ChEBI" id="CHEBI:18420"/>
    </ligand>
</feature>
<protein>
    <recommendedName>
        <fullName evidence="1">Ribonuclease 3</fullName>
        <ecNumber evidence="1">3.1.26.3</ecNumber>
    </recommendedName>
    <alternativeName>
        <fullName evidence="1">Ribonuclease III</fullName>
        <shortName evidence="1">RNase III</shortName>
    </alternativeName>
</protein>
<accession>Q8XJN8</accession>
<proteinExistence type="inferred from homology"/>